<proteinExistence type="inferred from homology"/>
<dbReference type="EMBL" id="DP000181">
    <property type="protein sequence ID" value="ABI93631.1"/>
    <property type="molecule type" value="Genomic_DNA"/>
</dbReference>
<dbReference type="RefSeq" id="XP_058153237.1">
    <property type="nucleotide sequence ID" value="XM_058297254.2"/>
</dbReference>
<dbReference type="GlyCosmos" id="Q07E45">
    <property type="glycosylation" value="1 site, No reported glycans"/>
</dbReference>
<dbReference type="GeneID" id="101429736"/>
<dbReference type="HOGENOM" id="CLU_035578_2_0_1"/>
<dbReference type="OrthoDB" id="5914722at2759"/>
<dbReference type="TreeFam" id="TF314162"/>
<dbReference type="GO" id="GO:0016020">
    <property type="term" value="C:membrane"/>
    <property type="evidence" value="ECO:0007669"/>
    <property type="project" value="UniProtKB-SubCell"/>
</dbReference>
<dbReference type="CDD" id="cd11557">
    <property type="entry name" value="ST7"/>
    <property type="match status" value="1"/>
</dbReference>
<dbReference type="InterPro" id="IPR007311">
    <property type="entry name" value="ST7"/>
</dbReference>
<dbReference type="PANTHER" id="PTHR12745">
    <property type="entry name" value="SUPPRESSION OF TUMORIGENICITY 7"/>
    <property type="match status" value="1"/>
</dbReference>
<dbReference type="PANTHER" id="PTHR12745:SF10">
    <property type="entry name" value="SUPPRESSOR OF TUMORIGENICITY 7 PROTEIN"/>
    <property type="match status" value="1"/>
</dbReference>
<dbReference type="Pfam" id="PF04184">
    <property type="entry name" value="ST7"/>
    <property type="match status" value="1"/>
</dbReference>
<comment type="subcellular location">
    <subcellularLocation>
        <location evidence="3">Membrane</location>
        <topology evidence="3">Multi-pass membrane protein</topology>
    </subcellularLocation>
</comment>
<comment type="similarity">
    <text evidence="3">Belongs to the ST7 family.</text>
</comment>
<organism>
    <name type="scientific">Dasypus novemcinctus</name>
    <name type="common">Nine-banded armadillo</name>
    <dbReference type="NCBI Taxonomy" id="9361"/>
    <lineage>
        <taxon>Eukaryota</taxon>
        <taxon>Metazoa</taxon>
        <taxon>Chordata</taxon>
        <taxon>Craniata</taxon>
        <taxon>Vertebrata</taxon>
        <taxon>Euteleostomi</taxon>
        <taxon>Mammalia</taxon>
        <taxon>Eutheria</taxon>
        <taxon>Xenarthra</taxon>
        <taxon>Cingulata</taxon>
        <taxon>Dasypodidae</taxon>
        <taxon>Dasypus</taxon>
    </lineage>
</organism>
<keyword id="KW-0325">Glycoprotein</keyword>
<keyword id="KW-0472">Membrane</keyword>
<keyword id="KW-0597">Phosphoprotein</keyword>
<keyword id="KW-0812">Transmembrane</keyword>
<keyword id="KW-1133">Transmembrane helix</keyword>
<gene>
    <name type="primary">ST7</name>
</gene>
<evidence type="ECO:0000250" key="1">
    <source>
        <dbReference type="UniProtKB" id="Q9NRC1"/>
    </source>
</evidence>
<evidence type="ECO:0000255" key="2"/>
<evidence type="ECO:0000305" key="3"/>
<feature type="chain" id="PRO_0000339198" description="Suppressor of tumorigenicity 7 protein">
    <location>
        <begin position="1"/>
        <end position="585"/>
    </location>
</feature>
<feature type="transmembrane region" description="Helical" evidence="2">
    <location>
        <begin position="15"/>
        <end position="35"/>
    </location>
</feature>
<feature type="transmembrane region" description="Helical" evidence="2">
    <location>
        <begin position="62"/>
        <end position="82"/>
    </location>
</feature>
<feature type="transmembrane region" description="Helical" evidence="2">
    <location>
        <begin position="512"/>
        <end position="532"/>
    </location>
</feature>
<feature type="modified residue" description="Phosphoserine" evidence="1">
    <location>
        <position position="386"/>
    </location>
</feature>
<feature type="glycosylation site" description="N-linked (GlcNAc...) asparagine" evidence="2">
    <location>
        <position position="47"/>
    </location>
</feature>
<sequence length="585" mass="67141">MAEAGTGFLEQLKSCIVWSWTYLWTVWFFFVLFLVYILRVPLKINDNLSTVSMFLNTLTPKFYVALTGTSSLISGLILIFEWWYFRKYGTSFIEQVSVSHLRPLLGGVDNNSSNSSNSSNGDSDSNRQSVSECKVWRNPLNLFRGAEYNRYTWVTGREPLTYYDMNLSAQDHQTFFTCDSDHLRPADAIMQKAWRERNPQARISAAHEALEINEIRSRVEVPLIASSTIWEIKLLPKCATAYILLAEEEATTIAEAEKLFKQALKAGDGCYRRSQQLQHHGSQYEAQHRRDTNVLVYIKRRLAMCARRLGRTREAVKMMRDLMKEFPLLSMFNIHENLLEALLELQAYADVQAVLAKYDDISLPKSATICYTAALLKARAVSDKFSPEAASRRGLSTAEMNAVEAIHRAVEFNPHVPKYLLEMKSLILPPEHILKRGDSEAIAYAFFHLAHWKRVEGALNLLHCTWEGTFRMIPYPLEKGHLFYPYPICTETADRELLPSFHEVSVYPKKELPFFILFTAGLCSFTAMLALLTHQFPELMGVFAKAMIDIFCSAEFRDWNCKSIFIRVEDELEIPPAPQSQHFQN</sequence>
<name>ST7_DASNO</name>
<reference key="1">
    <citation type="submission" date="2006-09" db="EMBL/GenBank/DDBJ databases">
        <title>NISC comparative sequencing initiative.</title>
        <authorList>
            <person name="Antonellis A."/>
            <person name="Ayele K."/>
            <person name="Benjamin B."/>
            <person name="Blakesley R.W."/>
            <person name="Boakye A."/>
            <person name="Bouffard G.G."/>
            <person name="Brinkley C."/>
            <person name="Brooks S."/>
            <person name="Chu G."/>
            <person name="Coleman H."/>
            <person name="Engle J."/>
            <person name="Gestole M."/>
            <person name="Greene A."/>
            <person name="Guan X."/>
            <person name="Gupta J."/>
            <person name="Haghighi P."/>
            <person name="Han J."/>
            <person name="Hansen N."/>
            <person name="Ho S.-L."/>
            <person name="Hu P."/>
            <person name="Hunter G."/>
            <person name="Hurle B."/>
            <person name="Idol J.R."/>
            <person name="Kwong P."/>
            <person name="Laric P."/>
            <person name="Larson S."/>
            <person name="Lee-Lin S.-Q."/>
            <person name="Legaspi R."/>
            <person name="Madden M."/>
            <person name="Maduro Q.L."/>
            <person name="Maduro V.B."/>
            <person name="Margulies E.H."/>
            <person name="Masiello C."/>
            <person name="Maskeri B."/>
            <person name="McDowell J."/>
            <person name="Mojidi H.A."/>
            <person name="Mullikin J.C."/>
            <person name="Oestreicher J.S."/>
            <person name="Park M."/>
            <person name="Portnoy M.E."/>
            <person name="Prasad A."/>
            <person name="Puri O."/>
            <person name="Reddix-Dugue N."/>
            <person name="Schandler K."/>
            <person name="Schueler M.G."/>
            <person name="Sison C."/>
            <person name="Stantripop S."/>
            <person name="Stephen E."/>
            <person name="Taye A."/>
            <person name="Thomas J.W."/>
            <person name="Thomas P.J."/>
            <person name="Tsipouri V."/>
            <person name="Ung L."/>
            <person name="Vogt J.L."/>
            <person name="Wetherby K.D."/>
            <person name="Young A."/>
            <person name="Green E.D."/>
        </authorList>
    </citation>
    <scope>NUCLEOTIDE SEQUENCE [LARGE SCALE GENOMIC DNA]</scope>
</reference>
<protein>
    <recommendedName>
        <fullName>Suppressor of tumorigenicity 7 protein</fullName>
    </recommendedName>
</protein>
<accession>Q07E45</accession>